<reference key="1">
    <citation type="journal article" date="2002" name="J. Bacteriol.">
        <title>Whole-genome comparison of Mycobacterium tuberculosis clinical and laboratory strains.</title>
        <authorList>
            <person name="Fleischmann R.D."/>
            <person name="Alland D."/>
            <person name="Eisen J.A."/>
            <person name="Carpenter L."/>
            <person name="White O."/>
            <person name="Peterson J.D."/>
            <person name="DeBoy R.T."/>
            <person name="Dodson R.J."/>
            <person name="Gwinn M.L."/>
            <person name="Haft D.H."/>
            <person name="Hickey E.K."/>
            <person name="Kolonay J.F."/>
            <person name="Nelson W.C."/>
            <person name="Umayam L.A."/>
            <person name="Ermolaeva M.D."/>
            <person name="Salzberg S.L."/>
            <person name="Delcher A."/>
            <person name="Utterback T.R."/>
            <person name="Weidman J.F."/>
            <person name="Khouri H.M."/>
            <person name="Gill J."/>
            <person name="Mikula A."/>
            <person name="Bishai W."/>
            <person name="Jacobs W.R. Jr."/>
            <person name="Venter J.C."/>
            <person name="Fraser C.M."/>
        </authorList>
    </citation>
    <scope>NUCLEOTIDE SEQUENCE [LARGE SCALE GENOMIC DNA]</scope>
    <source>
        <strain>CDC 1551 / Oshkosh</strain>
    </source>
</reference>
<sequence length="154" mass="16894">MKTGDTVADFELPDQTGTPRRLSVLLSDGPVVLFFYPAAMTPGCTKEACHFRDLAKEFAEVRASRVGISTDPVRKQAKFAEVRRFDYPLLSDAQGTVAAQFGVKRGLLGKLMPVKRTTFVIDTDRKVLDVISSEFSMDAHADKALATLRAIRSG</sequence>
<keyword id="KW-0049">Antioxidant</keyword>
<keyword id="KW-1015">Disulfide bond</keyword>
<keyword id="KW-0560">Oxidoreductase</keyword>
<keyword id="KW-0575">Peroxidase</keyword>
<keyword id="KW-0676">Redox-active center</keyword>
<keyword id="KW-1185">Reference proteome</keyword>
<proteinExistence type="inferred from homology"/>
<feature type="chain" id="PRO_0000428024" description="Putative peroxiredoxin MT1643">
    <location>
        <begin position="1"/>
        <end position="154"/>
    </location>
</feature>
<feature type="domain" description="Thioredoxin" evidence="2">
    <location>
        <begin position="1"/>
        <end position="153"/>
    </location>
</feature>
<feature type="active site" description="Cysteine sulfenic acid (-SOH) intermediate" evidence="1">
    <location>
        <position position="44"/>
    </location>
</feature>
<feature type="disulfide bond" description="Redox-active" evidence="1">
    <location>
        <begin position="44"/>
        <end position="49"/>
    </location>
</feature>
<evidence type="ECO:0000250" key="1">
    <source>
        <dbReference type="UniProtKB" id="P0AE52"/>
    </source>
</evidence>
<evidence type="ECO:0000255" key="2">
    <source>
        <dbReference type="PROSITE-ProRule" id="PRU00691"/>
    </source>
</evidence>
<evidence type="ECO:0000305" key="3"/>
<organism>
    <name type="scientific">Mycobacterium tuberculosis (strain CDC 1551 / Oshkosh)</name>
    <dbReference type="NCBI Taxonomy" id="83331"/>
    <lineage>
        <taxon>Bacteria</taxon>
        <taxon>Bacillati</taxon>
        <taxon>Actinomycetota</taxon>
        <taxon>Actinomycetes</taxon>
        <taxon>Mycobacteriales</taxon>
        <taxon>Mycobacteriaceae</taxon>
        <taxon>Mycobacterium</taxon>
        <taxon>Mycobacterium tuberculosis complex</taxon>
    </lineage>
</organism>
<comment type="function">
    <text evidence="1">Thiol-specific peroxidase that catalyzes the reduction of hydrogen peroxide and organic hydroperoxides to water and alcohols, respectively. Plays a role in cell protection against oxidative stress by detoxifying peroxides and as sensor of hydrogen peroxide-mediated signaling events.</text>
</comment>
<comment type="catalytic activity">
    <reaction evidence="1">
        <text>a hydroperoxide + [thioredoxin]-dithiol = an alcohol + [thioredoxin]-disulfide + H2O</text>
        <dbReference type="Rhea" id="RHEA:62620"/>
        <dbReference type="Rhea" id="RHEA-COMP:10698"/>
        <dbReference type="Rhea" id="RHEA-COMP:10700"/>
        <dbReference type="ChEBI" id="CHEBI:15377"/>
        <dbReference type="ChEBI" id="CHEBI:29950"/>
        <dbReference type="ChEBI" id="CHEBI:30879"/>
        <dbReference type="ChEBI" id="CHEBI:35924"/>
        <dbReference type="ChEBI" id="CHEBI:50058"/>
        <dbReference type="EC" id="1.11.1.24"/>
    </reaction>
</comment>
<comment type="subunit">
    <text evidence="1">Monomer.</text>
</comment>
<comment type="miscellaneous">
    <text evidence="1">The active site is a conserved redox-active cysteine residue, the peroxidatic cysteine (C(P)), which makes the nucleophilic attack on the peroxide substrate. The peroxide oxidizes the C(P)-SH to cysteine sulfenic acid (C(P)-SOH), which then reacts with another cysteine residue, the resolving cysteine (C(R)), to form a disulfide bridge. The disulfide is subsequently reduced by an appropriate electron donor to complete the catalytic cycle. In this atypical 2-Cys peroxiredoxin, C(R) is present in the same subunit to form an intramolecular disulfide. The disulfide is subsequently reduced by thioredoxin.</text>
</comment>
<comment type="similarity">
    <text evidence="3">Belongs to the peroxiredoxin family. BCP/PrxQ subfamily.</text>
</comment>
<protein>
    <recommendedName>
        <fullName>Putative peroxiredoxin MT1643</fullName>
        <ecNumber evidence="1">1.11.1.24</ecNumber>
    </recommendedName>
    <alternativeName>
        <fullName>Bacterioferritin comigratory protein</fullName>
    </alternativeName>
    <alternativeName>
        <fullName>Thioredoxin peroxidase</fullName>
    </alternativeName>
    <alternativeName>
        <fullName evidence="3">Thioredoxin-dependent peroxiredoxin MT1643</fullName>
    </alternativeName>
</protein>
<name>BCPB_MYCTO</name>
<gene>
    <name type="primary">bcpB</name>
    <name type="synonym">bcp1</name>
    <name type="ordered locus">MT1643</name>
</gene>
<dbReference type="EC" id="1.11.1.24" evidence="1"/>
<dbReference type="EMBL" id="AE000516">
    <property type="protein sequence ID" value="AAK45912.1"/>
    <property type="molecule type" value="Genomic_DNA"/>
</dbReference>
<dbReference type="PIR" id="G70819">
    <property type="entry name" value="G70819"/>
</dbReference>
<dbReference type="RefSeq" id="WP_003407974.1">
    <property type="nucleotide sequence ID" value="NZ_KK341227.1"/>
</dbReference>
<dbReference type="SMR" id="P9WID8"/>
<dbReference type="GeneID" id="45425576"/>
<dbReference type="KEGG" id="mtc:MT1643"/>
<dbReference type="PATRIC" id="fig|83331.31.peg.1766"/>
<dbReference type="HOGENOM" id="CLU_042529_14_2_11"/>
<dbReference type="Proteomes" id="UP000001020">
    <property type="component" value="Chromosome"/>
</dbReference>
<dbReference type="GO" id="GO:0005737">
    <property type="term" value="C:cytoplasm"/>
    <property type="evidence" value="ECO:0007669"/>
    <property type="project" value="TreeGrafter"/>
</dbReference>
<dbReference type="GO" id="GO:0008379">
    <property type="term" value="F:thioredoxin peroxidase activity"/>
    <property type="evidence" value="ECO:0007669"/>
    <property type="project" value="TreeGrafter"/>
</dbReference>
<dbReference type="GO" id="GO:0045454">
    <property type="term" value="P:cell redox homeostasis"/>
    <property type="evidence" value="ECO:0007669"/>
    <property type="project" value="TreeGrafter"/>
</dbReference>
<dbReference type="GO" id="GO:0034599">
    <property type="term" value="P:cellular response to oxidative stress"/>
    <property type="evidence" value="ECO:0007669"/>
    <property type="project" value="TreeGrafter"/>
</dbReference>
<dbReference type="CDD" id="cd03017">
    <property type="entry name" value="PRX_BCP"/>
    <property type="match status" value="1"/>
</dbReference>
<dbReference type="FunFam" id="3.40.30.10:FF:000267">
    <property type="entry name" value="Peroxidoxin bcpB"/>
    <property type="match status" value="1"/>
</dbReference>
<dbReference type="Gene3D" id="3.40.30.10">
    <property type="entry name" value="Glutaredoxin"/>
    <property type="match status" value="1"/>
</dbReference>
<dbReference type="InterPro" id="IPR000866">
    <property type="entry name" value="AhpC/TSA"/>
</dbReference>
<dbReference type="InterPro" id="IPR024706">
    <property type="entry name" value="Peroxiredoxin_AhpC-typ"/>
</dbReference>
<dbReference type="InterPro" id="IPR050924">
    <property type="entry name" value="Peroxiredoxin_BCP/PrxQ"/>
</dbReference>
<dbReference type="InterPro" id="IPR036249">
    <property type="entry name" value="Thioredoxin-like_sf"/>
</dbReference>
<dbReference type="InterPro" id="IPR013766">
    <property type="entry name" value="Thioredoxin_domain"/>
</dbReference>
<dbReference type="PANTHER" id="PTHR42801:SF8">
    <property type="entry name" value="PEROXIREDOXIN RV1608C-RELATED"/>
    <property type="match status" value="1"/>
</dbReference>
<dbReference type="PANTHER" id="PTHR42801">
    <property type="entry name" value="THIOREDOXIN-DEPENDENT PEROXIDE REDUCTASE"/>
    <property type="match status" value="1"/>
</dbReference>
<dbReference type="Pfam" id="PF00578">
    <property type="entry name" value="AhpC-TSA"/>
    <property type="match status" value="1"/>
</dbReference>
<dbReference type="PIRSF" id="PIRSF000239">
    <property type="entry name" value="AHPC"/>
    <property type="match status" value="1"/>
</dbReference>
<dbReference type="SUPFAM" id="SSF52833">
    <property type="entry name" value="Thioredoxin-like"/>
    <property type="match status" value="1"/>
</dbReference>
<dbReference type="PROSITE" id="PS51352">
    <property type="entry name" value="THIOREDOXIN_2"/>
    <property type="match status" value="1"/>
</dbReference>
<accession>P9WID8</accession>
<accession>L0T7E6</accession>
<accession>O53911</accession>
<accession>Q7D8A1</accession>